<keyword id="KW-0150">Chloroplast</keyword>
<keyword id="KW-0472">Membrane</keyword>
<keyword id="KW-0520">NAD</keyword>
<keyword id="KW-0521">NADP</keyword>
<keyword id="KW-0934">Plastid</keyword>
<keyword id="KW-0618">Plastoquinone</keyword>
<keyword id="KW-0874">Quinone</keyword>
<keyword id="KW-0793">Thylakoid</keyword>
<keyword id="KW-1278">Translocase</keyword>
<keyword id="KW-0812">Transmembrane</keyword>
<keyword id="KW-1133">Transmembrane helix</keyword>
<keyword id="KW-0813">Transport</keyword>
<sequence length="510" mass="56651">MIWHVQNENFILDSTRIFMKAFHLLLFDGSLIFPECILIFGLILLLMIDSTSDQKDLPWFYFISSTSLVMSITALLFRWREEPMISFSGNFQTNNFNEIFQFLILLCSTLCIPLSVEYIECTEMAITEFLLFVLTATLGGMFLCGANDLITIFVAPECFSFCSYLLSGYTKKDVRSNEATMKYLLMGGASSSILVHAFSWLYGSSGGEIELQEIVNGLINTQMYNSPGISIALLFITVGIGFKLSPAPSHQWTPDVYEGSPTPVVAFLSVTSKVAASASATRIFDIPFYFSSNEWHLLLEILAILSMILGNIIAITQTSMKRMLAYSSIGQIGYVIIGIIVGDSNDGYASMITYMLFYISMNLGTFACIVLFGLRTGTDNIRDYAGLYTKDPFLALSLALCLLSLGGLPPLAGFFGKLYLFRCGWQAGLYSLVLIGLLTSVVSIYYYLKIIKLLMTGRNQEITPHVRNYRRSPLRSNNSIELSMIVCVIASTIPGISMNPIIAIAQDTLF</sequence>
<dbReference type="EC" id="7.1.1.-" evidence="1"/>
<dbReference type="EMBL" id="DQ673255">
    <property type="protein sequence ID" value="ABG74672.1"/>
    <property type="molecule type" value="Genomic_DNA"/>
</dbReference>
<dbReference type="SMR" id="P0CC78"/>
<dbReference type="GO" id="GO:0009535">
    <property type="term" value="C:chloroplast thylakoid membrane"/>
    <property type="evidence" value="ECO:0007669"/>
    <property type="project" value="UniProtKB-SubCell"/>
</dbReference>
<dbReference type="GO" id="GO:0008137">
    <property type="term" value="F:NADH dehydrogenase (ubiquinone) activity"/>
    <property type="evidence" value="ECO:0007669"/>
    <property type="project" value="InterPro"/>
</dbReference>
<dbReference type="GO" id="GO:0048038">
    <property type="term" value="F:quinone binding"/>
    <property type="evidence" value="ECO:0007669"/>
    <property type="project" value="UniProtKB-KW"/>
</dbReference>
<dbReference type="GO" id="GO:0042773">
    <property type="term" value="P:ATP synthesis coupled electron transport"/>
    <property type="evidence" value="ECO:0007669"/>
    <property type="project" value="InterPro"/>
</dbReference>
<dbReference type="GO" id="GO:0019684">
    <property type="term" value="P:photosynthesis, light reaction"/>
    <property type="evidence" value="ECO:0007669"/>
    <property type="project" value="UniProtKB-UniRule"/>
</dbReference>
<dbReference type="HAMAP" id="MF_00445">
    <property type="entry name" value="NDH1_NuoN_1"/>
    <property type="match status" value="1"/>
</dbReference>
<dbReference type="InterPro" id="IPR010096">
    <property type="entry name" value="NADH-Q_OxRdtase_suN/2"/>
</dbReference>
<dbReference type="InterPro" id="IPR001750">
    <property type="entry name" value="ND/Mrp_TM"/>
</dbReference>
<dbReference type="InterPro" id="IPR045693">
    <property type="entry name" value="Ndh2_N"/>
</dbReference>
<dbReference type="NCBIfam" id="TIGR01770">
    <property type="entry name" value="NDH_I_N"/>
    <property type="match status" value="1"/>
</dbReference>
<dbReference type="NCBIfam" id="NF002701">
    <property type="entry name" value="PRK02504.1"/>
    <property type="match status" value="1"/>
</dbReference>
<dbReference type="PANTHER" id="PTHR22773">
    <property type="entry name" value="NADH DEHYDROGENASE"/>
    <property type="match status" value="1"/>
</dbReference>
<dbReference type="Pfam" id="PF19530">
    <property type="entry name" value="Ndh2_N"/>
    <property type="match status" value="1"/>
</dbReference>
<dbReference type="Pfam" id="PF00361">
    <property type="entry name" value="Proton_antipo_M"/>
    <property type="match status" value="1"/>
</dbReference>
<dbReference type="PRINTS" id="PR01434">
    <property type="entry name" value="NADHDHGNASE5"/>
</dbReference>
<comment type="function">
    <text evidence="1">NDH shuttles electrons from NAD(P)H:plastoquinone, via FMN and iron-sulfur (Fe-S) centers, to quinones in the photosynthetic chain and possibly in a chloroplast respiratory chain. The immediate electron acceptor for the enzyme in this species is believed to be plastoquinone. Couples the redox reaction to proton translocation, and thus conserves the redox energy in a proton gradient.</text>
</comment>
<comment type="catalytic activity">
    <reaction evidence="1">
        <text>a plastoquinone + NADH + (n+1) H(+)(in) = a plastoquinol + NAD(+) + n H(+)(out)</text>
        <dbReference type="Rhea" id="RHEA:42608"/>
        <dbReference type="Rhea" id="RHEA-COMP:9561"/>
        <dbReference type="Rhea" id="RHEA-COMP:9562"/>
        <dbReference type="ChEBI" id="CHEBI:15378"/>
        <dbReference type="ChEBI" id="CHEBI:17757"/>
        <dbReference type="ChEBI" id="CHEBI:57540"/>
        <dbReference type="ChEBI" id="CHEBI:57945"/>
        <dbReference type="ChEBI" id="CHEBI:62192"/>
    </reaction>
</comment>
<comment type="catalytic activity">
    <reaction evidence="1">
        <text>a plastoquinone + NADPH + (n+1) H(+)(in) = a plastoquinol + NADP(+) + n H(+)(out)</text>
        <dbReference type="Rhea" id="RHEA:42612"/>
        <dbReference type="Rhea" id="RHEA-COMP:9561"/>
        <dbReference type="Rhea" id="RHEA-COMP:9562"/>
        <dbReference type="ChEBI" id="CHEBI:15378"/>
        <dbReference type="ChEBI" id="CHEBI:17757"/>
        <dbReference type="ChEBI" id="CHEBI:57783"/>
        <dbReference type="ChEBI" id="CHEBI:58349"/>
        <dbReference type="ChEBI" id="CHEBI:62192"/>
    </reaction>
</comment>
<comment type="subunit">
    <text evidence="1">NDH is composed of at least 16 different subunits, 5 of which are encoded in the nucleus.</text>
</comment>
<comment type="subcellular location">
    <subcellularLocation>
        <location evidence="1">Plastid</location>
        <location evidence="1">Chloroplast thylakoid membrane</location>
        <topology evidence="1">Multi-pass membrane protein</topology>
    </subcellularLocation>
</comment>
<comment type="similarity">
    <text evidence="1">Belongs to the complex I subunit 2 family.</text>
</comment>
<accession>P0CC78</accession>
<accession>Q06R70</accession>
<name>NU2C1_JASNU</name>
<evidence type="ECO:0000255" key="1">
    <source>
        <dbReference type="HAMAP-Rule" id="MF_00445"/>
    </source>
</evidence>
<gene>
    <name evidence="1" type="primary">ndhB1</name>
    <name type="ORF">JNC1024</name>
</gene>
<reference key="1">
    <citation type="journal article" date="2007" name="Mol. Biol. Evol.">
        <title>Gene relocations within chloroplast genomes of Jasminum and Menodora (Oleaceae) are due to multiple, overlapping inversions.</title>
        <authorList>
            <person name="Lee H.-L."/>
            <person name="Jansen R.K."/>
            <person name="Chumley T.W."/>
            <person name="Kim K.-J."/>
        </authorList>
    </citation>
    <scope>NUCLEOTIDE SEQUENCE [LARGE SCALE GENOMIC DNA]</scope>
</reference>
<geneLocation type="chloroplast"/>
<proteinExistence type="inferred from homology"/>
<feature type="chain" id="PRO_0000275599" description="NAD(P)H-quinone oxidoreductase subunit 2 A, chloroplastic">
    <location>
        <begin position="1"/>
        <end position="510"/>
    </location>
</feature>
<feature type="transmembrane region" description="Helical" evidence="1">
    <location>
        <begin position="24"/>
        <end position="44"/>
    </location>
</feature>
<feature type="transmembrane region" description="Helical" evidence="1">
    <location>
        <begin position="57"/>
        <end position="77"/>
    </location>
</feature>
<feature type="transmembrane region" description="Helical" evidence="1">
    <location>
        <begin position="99"/>
        <end position="119"/>
    </location>
</feature>
<feature type="transmembrane region" description="Helical" evidence="1">
    <location>
        <begin position="124"/>
        <end position="144"/>
    </location>
</feature>
<feature type="transmembrane region" description="Helical" evidence="1">
    <location>
        <begin position="149"/>
        <end position="169"/>
    </location>
</feature>
<feature type="transmembrane region" description="Helical" evidence="1">
    <location>
        <begin position="183"/>
        <end position="203"/>
    </location>
</feature>
<feature type="transmembrane region" description="Helical" evidence="1">
    <location>
        <begin position="227"/>
        <end position="247"/>
    </location>
</feature>
<feature type="transmembrane region" description="Helical" evidence="1">
    <location>
        <begin position="295"/>
        <end position="315"/>
    </location>
</feature>
<feature type="transmembrane region" description="Helical" evidence="1">
    <location>
        <begin position="323"/>
        <end position="343"/>
    </location>
</feature>
<feature type="transmembrane region" description="Helical" evidence="1">
    <location>
        <begin position="354"/>
        <end position="374"/>
    </location>
</feature>
<feature type="transmembrane region" description="Helical" evidence="1">
    <location>
        <begin position="395"/>
        <end position="415"/>
    </location>
</feature>
<feature type="transmembrane region" description="Helical" evidence="1">
    <location>
        <begin position="428"/>
        <end position="448"/>
    </location>
</feature>
<feature type="transmembrane region" description="Helical" evidence="1">
    <location>
        <begin position="484"/>
        <end position="504"/>
    </location>
</feature>
<organism>
    <name type="scientific">Jasminum nudiflorum</name>
    <name type="common">Winter jasmine</name>
    <dbReference type="NCBI Taxonomy" id="126431"/>
    <lineage>
        <taxon>Eukaryota</taxon>
        <taxon>Viridiplantae</taxon>
        <taxon>Streptophyta</taxon>
        <taxon>Embryophyta</taxon>
        <taxon>Tracheophyta</taxon>
        <taxon>Spermatophyta</taxon>
        <taxon>Magnoliopsida</taxon>
        <taxon>eudicotyledons</taxon>
        <taxon>Gunneridae</taxon>
        <taxon>Pentapetalae</taxon>
        <taxon>asterids</taxon>
        <taxon>lamiids</taxon>
        <taxon>Lamiales</taxon>
        <taxon>Oleaceae</taxon>
        <taxon>Jasmineae</taxon>
        <taxon>Jasminum</taxon>
    </lineage>
</organism>
<protein>
    <recommendedName>
        <fullName evidence="1">NAD(P)H-quinone oxidoreductase subunit 2 A, chloroplastic</fullName>
        <ecNumber evidence="1">7.1.1.-</ecNumber>
    </recommendedName>
    <alternativeName>
        <fullName evidence="1">NAD(P)H dehydrogenase, subunit 2 A</fullName>
    </alternativeName>
    <alternativeName>
        <fullName evidence="1">NADH-plastoquinone oxidoreductase subunit 2 A</fullName>
    </alternativeName>
</protein>